<proteinExistence type="inferred from homology"/>
<dbReference type="EC" id="7.4.2.8" evidence="1"/>
<dbReference type="EMBL" id="CP000482">
    <property type="protein sequence ID" value="ABK98385.1"/>
    <property type="molecule type" value="Genomic_DNA"/>
</dbReference>
<dbReference type="RefSeq" id="WP_011734697.1">
    <property type="nucleotide sequence ID" value="NC_008609.1"/>
</dbReference>
<dbReference type="SMR" id="A1AM15"/>
<dbReference type="STRING" id="338966.Ppro_0755"/>
<dbReference type="KEGG" id="ppd:Ppro_0755"/>
<dbReference type="eggNOG" id="COG0653">
    <property type="taxonomic scope" value="Bacteria"/>
</dbReference>
<dbReference type="HOGENOM" id="CLU_005314_3_0_7"/>
<dbReference type="OrthoDB" id="9805579at2"/>
<dbReference type="Proteomes" id="UP000006732">
    <property type="component" value="Chromosome"/>
</dbReference>
<dbReference type="GO" id="GO:0031522">
    <property type="term" value="C:cell envelope Sec protein transport complex"/>
    <property type="evidence" value="ECO:0007669"/>
    <property type="project" value="TreeGrafter"/>
</dbReference>
<dbReference type="GO" id="GO:0005829">
    <property type="term" value="C:cytosol"/>
    <property type="evidence" value="ECO:0007669"/>
    <property type="project" value="TreeGrafter"/>
</dbReference>
<dbReference type="GO" id="GO:0005886">
    <property type="term" value="C:plasma membrane"/>
    <property type="evidence" value="ECO:0007669"/>
    <property type="project" value="UniProtKB-SubCell"/>
</dbReference>
<dbReference type="GO" id="GO:0005524">
    <property type="term" value="F:ATP binding"/>
    <property type="evidence" value="ECO:0007669"/>
    <property type="project" value="UniProtKB-UniRule"/>
</dbReference>
<dbReference type="GO" id="GO:0046872">
    <property type="term" value="F:metal ion binding"/>
    <property type="evidence" value="ECO:0007669"/>
    <property type="project" value="UniProtKB-KW"/>
</dbReference>
<dbReference type="GO" id="GO:0008564">
    <property type="term" value="F:protein-exporting ATPase activity"/>
    <property type="evidence" value="ECO:0007669"/>
    <property type="project" value="UniProtKB-EC"/>
</dbReference>
<dbReference type="GO" id="GO:0065002">
    <property type="term" value="P:intracellular protein transmembrane transport"/>
    <property type="evidence" value="ECO:0007669"/>
    <property type="project" value="UniProtKB-UniRule"/>
</dbReference>
<dbReference type="GO" id="GO:0017038">
    <property type="term" value="P:protein import"/>
    <property type="evidence" value="ECO:0007669"/>
    <property type="project" value="InterPro"/>
</dbReference>
<dbReference type="GO" id="GO:0006605">
    <property type="term" value="P:protein targeting"/>
    <property type="evidence" value="ECO:0007669"/>
    <property type="project" value="UniProtKB-UniRule"/>
</dbReference>
<dbReference type="GO" id="GO:0043952">
    <property type="term" value="P:protein transport by the Sec complex"/>
    <property type="evidence" value="ECO:0007669"/>
    <property type="project" value="TreeGrafter"/>
</dbReference>
<dbReference type="CDD" id="cd17928">
    <property type="entry name" value="DEXDc_SecA"/>
    <property type="match status" value="1"/>
</dbReference>
<dbReference type="CDD" id="cd18803">
    <property type="entry name" value="SF2_C_secA"/>
    <property type="match status" value="1"/>
</dbReference>
<dbReference type="FunFam" id="3.40.50.300:FF:000113">
    <property type="entry name" value="Preprotein translocase subunit SecA"/>
    <property type="match status" value="1"/>
</dbReference>
<dbReference type="FunFam" id="3.40.50.300:FF:000246">
    <property type="entry name" value="Preprotein translocase subunit SecA"/>
    <property type="match status" value="1"/>
</dbReference>
<dbReference type="FunFam" id="3.90.1440.10:FF:000001">
    <property type="entry name" value="Preprotein translocase subunit SecA"/>
    <property type="match status" value="1"/>
</dbReference>
<dbReference type="FunFam" id="1.10.3060.10:FF:000003">
    <property type="entry name" value="Protein translocase subunit SecA"/>
    <property type="match status" value="1"/>
</dbReference>
<dbReference type="FunFam" id="3.40.50.300:FF:000334">
    <property type="entry name" value="Protein translocase subunit SecA"/>
    <property type="match status" value="1"/>
</dbReference>
<dbReference type="Gene3D" id="1.10.3060.10">
    <property type="entry name" value="Helical scaffold and wing domains of SecA"/>
    <property type="match status" value="1"/>
</dbReference>
<dbReference type="Gene3D" id="3.40.50.300">
    <property type="entry name" value="P-loop containing nucleotide triphosphate hydrolases"/>
    <property type="match status" value="2"/>
</dbReference>
<dbReference type="Gene3D" id="3.90.1440.10">
    <property type="entry name" value="SecA, preprotein cross-linking domain"/>
    <property type="match status" value="1"/>
</dbReference>
<dbReference type="HAMAP" id="MF_01382">
    <property type="entry name" value="SecA"/>
    <property type="match status" value="1"/>
</dbReference>
<dbReference type="InterPro" id="IPR014001">
    <property type="entry name" value="Helicase_ATP-bd"/>
</dbReference>
<dbReference type="InterPro" id="IPR001650">
    <property type="entry name" value="Helicase_C-like"/>
</dbReference>
<dbReference type="InterPro" id="IPR027417">
    <property type="entry name" value="P-loop_NTPase"/>
</dbReference>
<dbReference type="InterPro" id="IPR004027">
    <property type="entry name" value="SEC_C_motif"/>
</dbReference>
<dbReference type="InterPro" id="IPR000185">
    <property type="entry name" value="SecA"/>
</dbReference>
<dbReference type="InterPro" id="IPR020937">
    <property type="entry name" value="SecA_CS"/>
</dbReference>
<dbReference type="InterPro" id="IPR011115">
    <property type="entry name" value="SecA_DEAD"/>
</dbReference>
<dbReference type="InterPro" id="IPR014018">
    <property type="entry name" value="SecA_motor_DEAD"/>
</dbReference>
<dbReference type="InterPro" id="IPR011130">
    <property type="entry name" value="SecA_preprotein_X-link_dom"/>
</dbReference>
<dbReference type="InterPro" id="IPR044722">
    <property type="entry name" value="SecA_SF2_C"/>
</dbReference>
<dbReference type="InterPro" id="IPR011116">
    <property type="entry name" value="SecA_Wing/Scaffold"/>
</dbReference>
<dbReference type="InterPro" id="IPR036266">
    <property type="entry name" value="SecA_Wing/Scaffold_sf"/>
</dbReference>
<dbReference type="InterPro" id="IPR036670">
    <property type="entry name" value="SecA_X-link_sf"/>
</dbReference>
<dbReference type="NCBIfam" id="NF009538">
    <property type="entry name" value="PRK12904.1"/>
    <property type="match status" value="1"/>
</dbReference>
<dbReference type="NCBIfam" id="TIGR00963">
    <property type="entry name" value="secA"/>
    <property type="match status" value="1"/>
</dbReference>
<dbReference type="PANTHER" id="PTHR30612:SF0">
    <property type="entry name" value="CHLOROPLAST PROTEIN-TRANSPORTING ATPASE"/>
    <property type="match status" value="1"/>
</dbReference>
<dbReference type="PANTHER" id="PTHR30612">
    <property type="entry name" value="SECA INNER MEMBRANE COMPONENT OF SEC PROTEIN SECRETION SYSTEM"/>
    <property type="match status" value="1"/>
</dbReference>
<dbReference type="Pfam" id="PF21090">
    <property type="entry name" value="P-loop_SecA"/>
    <property type="match status" value="1"/>
</dbReference>
<dbReference type="Pfam" id="PF02810">
    <property type="entry name" value="SEC-C"/>
    <property type="match status" value="1"/>
</dbReference>
<dbReference type="Pfam" id="PF07517">
    <property type="entry name" value="SecA_DEAD"/>
    <property type="match status" value="1"/>
</dbReference>
<dbReference type="Pfam" id="PF01043">
    <property type="entry name" value="SecA_PP_bind"/>
    <property type="match status" value="1"/>
</dbReference>
<dbReference type="Pfam" id="PF07516">
    <property type="entry name" value="SecA_SW"/>
    <property type="match status" value="1"/>
</dbReference>
<dbReference type="PRINTS" id="PR00906">
    <property type="entry name" value="SECA"/>
</dbReference>
<dbReference type="SMART" id="SM00957">
    <property type="entry name" value="SecA_DEAD"/>
    <property type="match status" value="1"/>
</dbReference>
<dbReference type="SMART" id="SM00958">
    <property type="entry name" value="SecA_PP_bind"/>
    <property type="match status" value="1"/>
</dbReference>
<dbReference type="SUPFAM" id="SSF81886">
    <property type="entry name" value="Helical scaffold and wing domains of SecA"/>
    <property type="match status" value="1"/>
</dbReference>
<dbReference type="SUPFAM" id="SSF52540">
    <property type="entry name" value="P-loop containing nucleoside triphosphate hydrolases"/>
    <property type="match status" value="2"/>
</dbReference>
<dbReference type="SUPFAM" id="SSF81767">
    <property type="entry name" value="Pre-protein crosslinking domain of SecA"/>
    <property type="match status" value="1"/>
</dbReference>
<dbReference type="PROSITE" id="PS01312">
    <property type="entry name" value="SECA"/>
    <property type="match status" value="1"/>
</dbReference>
<dbReference type="PROSITE" id="PS51196">
    <property type="entry name" value="SECA_MOTOR_DEAD"/>
    <property type="match status" value="1"/>
</dbReference>
<name>SECA_PELPD</name>
<sequence>MFGSLVKKVFGSKNEREIKKLWPIVARINELEASISPLSDEQLRDKTAEFKERHGKGESLDALMPEAFAVCREASKRVLGMRHFDVQLIGGMVLHSGKISEMKTGEGKTLVATLPAYLNAISGKGVHVVTVNDYLARRDSEWMGRLYSFLGLTVGVIVHGVEDDQRRINYAADITYGTNNEFGFDYLRDNMKFSLDDYVQRGFNFAIVDEVDSILIDEARTPLIISGPTEDSTDKYYVIDRIIPLLKKGEVKEEEANTLSGKRKLYTGDFTIDEKAKSATLTEQGVLKVEKLLKVDNLYDPRNIEFLHHTQQALRAHAMYRRDVDYVVKDGEVMIVDEFTGRLMPGRRWSDGLHQAIEAKEGVTIENENQTLATITFQNYFRMYKKLGGMTGTADTEAEEFHKIYKLDVVVIPTNRPLLRPDFPDVIYKTEREKFGAVIQDIKEHYATGQPCLVGTISIEKSEVLSELLKREGIPHNVLNAKQHEREAEIVSQAGRLKAITIATNMAGRGTDILLGGNADALASQWRRANPEAGEEEYQAILKNYKTVCAAEHDEVVRLGGLHIIGTERHESRRIDNQLRGRSGRQGDPGSSRFYLSLEDDLLRIFGSERVSKIMDFLKIEEGEAITHAMINKSIENAQKKVEAHNFDIRKHLIEYDDVMNKQREVIYTQRREILGGQDIRESFLEMLDETVEEIVASYAIEKSPAEEWDWQAINEAVFKCFNLQFELPQDTMARLTPAGLKEMLAEQAHALFAARVKEMGDDLIDHLIKVMMLQAIDTHWKDHLLNIDHLKEGIGLRGYGQKDPKQEYKKEAYELFMGLIMRIREEVVERIFWVQLERPEEVEEIEEEQRSKKIVFNLSEEEERVQEPARSNRVAGRNDPCPCGSGKKYKKCCGK</sequence>
<accession>A1AM15</accession>
<comment type="function">
    <text evidence="1">Part of the Sec protein translocase complex. Interacts with the SecYEG preprotein conducting channel. Has a central role in coupling the hydrolysis of ATP to the transfer of proteins into and across the cell membrane, serving as an ATP-driven molecular motor driving the stepwise translocation of polypeptide chains across the membrane.</text>
</comment>
<comment type="catalytic activity">
    <reaction evidence="1">
        <text>ATP + H2O + cellular proteinSide 1 = ADP + phosphate + cellular proteinSide 2.</text>
        <dbReference type="EC" id="7.4.2.8"/>
    </reaction>
</comment>
<comment type="cofactor">
    <cofactor evidence="1">
        <name>Zn(2+)</name>
        <dbReference type="ChEBI" id="CHEBI:29105"/>
    </cofactor>
    <text evidence="1">May bind 1 zinc ion per subunit.</text>
</comment>
<comment type="subunit">
    <text evidence="1">Monomer and homodimer. Part of the essential Sec protein translocation apparatus which comprises SecA, SecYEG and auxiliary proteins SecDF-YajC and YidC.</text>
</comment>
<comment type="subcellular location">
    <subcellularLocation>
        <location evidence="1">Cell inner membrane</location>
        <topology evidence="1">Peripheral membrane protein</topology>
        <orientation evidence="1">Cytoplasmic side</orientation>
    </subcellularLocation>
    <subcellularLocation>
        <location evidence="1">Cytoplasm</location>
    </subcellularLocation>
    <text evidence="1">Distribution is 50-50.</text>
</comment>
<comment type="similarity">
    <text evidence="1">Belongs to the SecA family.</text>
</comment>
<organism>
    <name type="scientific">Pelobacter propionicus (strain DSM 2379 / NBRC 103807 / OttBd1)</name>
    <dbReference type="NCBI Taxonomy" id="338966"/>
    <lineage>
        <taxon>Bacteria</taxon>
        <taxon>Pseudomonadati</taxon>
        <taxon>Thermodesulfobacteriota</taxon>
        <taxon>Desulfuromonadia</taxon>
        <taxon>Desulfuromonadales</taxon>
        <taxon>Desulfuromonadaceae</taxon>
        <taxon>Pelobacter</taxon>
    </lineage>
</organism>
<gene>
    <name evidence="1" type="primary">secA</name>
    <name type="ordered locus">Ppro_0755</name>
</gene>
<feature type="chain" id="PRO_0000318402" description="Protein translocase subunit SecA">
    <location>
        <begin position="1"/>
        <end position="896"/>
    </location>
</feature>
<feature type="region of interest" description="Disordered" evidence="2">
    <location>
        <begin position="867"/>
        <end position="889"/>
    </location>
</feature>
<feature type="binding site" evidence="1">
    <location>
        <position position="87"/>
    </location>
    <ligand>
        <name>ATP</name>
        <dbReference type="ChEBI" id="CHEBI:30616"/>
    </ligand>
</feature>
<feature type="binding site" evidence="1">
    <location>
        <begin position="105"/>
        <end position="109"/>
    </location>
    <ligand>
        <name>ATP</name>
        <dbReference type="ChEBI" id="CHEBI:30616"/>
    </ligand>
</feature>
<feature type="binding site" evidence="1">
    <location>
        <position position="512"/>
    </location>
    <ligand>
        <name>ATP</name>
        <dbReference type="ChEBI" id="CHEBI:30616"/>
    </ligand>
</feature>
<feature type="binding site" evidence="1">
    <location>
        <position position="882"/>
    </location>
    <ligand>
        <name>Zn(2+)</name>
        <dbReference type="ChEBI" id="CHEBI:29105"/>
    </ligand>
</feature>
<feature type="binding site" evidence="1">
    <location>
        <position position="884"/>
    </location>
    <ligand>
        <name>Zn(2+)</name>
        <dbReference type="ChEBI" id="CHEBI:29105"/>
    </ligand>
</feature>
<feature type="binding site" evidence="1">
    <location>
        <position position="893"/>
    </location>
    <ligand>
        <name>Zn(2+)</name>
        <dbReference type="ChEBI" id="CHEBI:29105"/>
    </ligand>
</feature>
<feature type="binding site" evidence="1">
    <location>
        <position position="894"/>
    </location>
    <ligand>
        <name>Zn(2+)</name>
        <dbReference type="ChEBI" id="CHEBI:29105"/>
    </ligand>
</feature>
<protein>
    <recommendedName>
        <fullName evidence="1">Protein translocase subunit SecA</fullName>
        <ecNumber evidence="1">7.4.2.8</ecNumber>
    </recommendedName>
</protein>
<evidence type="ECO:0000255" key="1">
    <source>
        <dbReference type="HAMAP-Rule" id="MF_01382"/>
    </source>
</evidence>
<evidence type="ECO:0000256" key="2">
    <source>
        <dbReference type="SAM" id="MobiDB-lite"/>
    </source>
</evidence>
<reference key="1">
    <citation type="submission" date="2006-10" db="EMBL/GenBank/DDBJ databases">
        <title>Complete sequence of chromosome of Pelobacter propionicus DSM 2379.</title>
        <authorList>
            <consortium name="US DOE Joint Genome Institute"/>
            <person name="Copeland A."/>
            <person name="Lucas S."/>
            <person name="Lapidus A."/>
            <person name="Barry K."/>
            <person name="Detter J.C."/>
            <person name="Glavina del Rio T."/>
            <person name="Hammon N."/>
            <person name="Israni S."/>
            <person name="Dalin E."/>
            <person name="Tice H."/>
            <person name="Pitluck S."/>
            <person name="Saunders E."/>
            <person name="Brettin T."/>
            <person name="Bruce D."/>
            <person name="Han C."/>
            <person name="Tapia R."/>
            <person name="Schmutz J."/>
            <person name="Larimer F."/>
            <person name="Land M."/>
            <person name="Hauser L."/>
            <person name="Kyrpides N."/>
            <person name="Kim E."/>
            <person name="Lovley D."/>
            <person name="Richardson P."/>
        </authorList>
    </citation>
    <scope>NUCLEOTIDE SEQUENCE [LARGE SCALE GENOMIC DNA]</scope>
    <source>
        <strain>DSM 2379 / NBRC 103807 / OttBd1</strain>
    </source>
</reference>
<keyword id="KW-0067">ATP-binding</keyword>
<keyword id="KW-0997">Cell inner membrane</keyword>
<keyword id="KW-1003">Cell membrane</keyword>
<keyword id="KW-0963">Cytoplasm</keyword>
<keyword id="KW-0472">Membrane</keyword>
<keyword id="KW-0479">Metal-binding</keyword>
<keyword id="KW-0547">Nucleotide-binding</keyword>
<keyword id="KW-0653">Protein transport</keyword>
<keyword id="KW-1185">Reference proteome</keyword>
<keyword id="KW-1278">Translocase</keyword>
<keyword id="KW-0811">Translocation</keyword>
<keyword id="KW-0813">Transport</keyword>
<keyword id="KW-0862">Zinc</keyword>